<reference key="1">
    <citation type="journal article" date="2000" name="Nature">
        <title>Caffeine synthase gene from tea leaves.</title>
        <authorList>
            <person name="Kato M."/>
            <person name="Mizuno K."/>
            <person name="Crozier A."/>
            <person name="Fujimura T."/>
            <person name="Ashihara H."/>
        </authorList>
    </citation>
    <scope>NUCLEOTIDE SEQUENCE [MRNA]</scope>
    <scope>FUNCTION</scope>
    <scope>CATALYTIC ACTIVITY</scope>
    <scope>PATHWAY</scope>
</reference>
<reference key="2">
    <citation type="submission" date="2007-03" db="EMBL/GenBank/DDBJ databases">
        <title>Cloning and analysis of Camellia sinensis TCS genomic DNA sequence for caffeine synthase.</title>
        <authorList>
            <person name="Deng W.W."/>
            <person name="Jiang C.J."/>
            <person name="Wang Z.X."/>
            <person name="Lee Y.Y."/>
            <person name="Shi R.J."/>
            <person name="Zhu L."/>
            <person name="Ye A.H."/>
            <person name="Yu M."/>
        </authorList>
    </citation>
    <scope>NUCLEOTIDE SEQUENCE [GENOMIC DNA]</scope>
    <source>
        <tissue>Leaf</tissue>
    </source>
</reference>
<reference key="3">
    <citation type="submission" date="2012-08" db="EMBL/GenBank/DDBJ databases">
        <title>Cloning and analysis of Camellia sinensis TCS genomic DNA sequence for caffeine synthase.</title>
        <authorList>
            <person name="Jin J.Q."/>
            <person name="Chen L."/>
            <person name="Ma C.L."/>
            <person name="Yao M.Z."/>
        </authorList>
    </citation>
    <scope>NUCLEOTIDE SEQUENCE [GENOMIC DNA]</scope>
</reference>
<reference key="4">
    <citation type="journal article" date="1999" name="Plant Physiol.">
        <title>Purification and characterization of caffeine synthase from tea leaves.</title>
        <authorList>
            <person name="Kato M."/>
            <person name="Mizuno K."/>
            <person name="Fujimura T."/>
            <person name="Iwama M."/>
            <person name="Irie M."/>
            <person name="Crozier A."/>
            <person name="Ashihara H."/>
        </authorList>
    </citation>
    <scope>PROTEIN SEQUENCE OF 14-33</scope>
    <scope>BIOPHYSICOCHEMICAL PROPERTIES</scope>
</reference>
<reference key="5">
    <citation type="journal article" date="2003" name="FEBS Lett.">
        <title>Isolation of a new dual-functional caffeine synthase gene encoding an enzyme for the conversion of 7-methylxanthine to caffeine from coffee (Coffea arabica L.).</title>
        <authorList>
            <person name="Mizuno K."/>
            <person name="Okuda A."/>
            <person name="Kato M."/>
            <person name="Yoneyama N."/>
            <person name="Tanaka H."/>
            <person name="Ashihara H."/>
            <person name="Fujimura T."/>
        </authorList>
    </citation>
    <scope>BIOPHYSICOCHEMICAL PROPERTIES</scope>
</reference>
<reference key="6">
    <citation type="journal article" date="2003" name="FEBS Lett.">
        <title>The first committed step reaction of caffeine biosynthesis: 7-methylxanthosine synthase is closely homologous to caffeine synthases in coffee (Coffea arabica L.).</title>
        <authorList>
            <person name="Mizuno K."/>
            <person name="Kato M."/>
            <person name="Irino F."/>
            <person name="Yoneyama N."/>
            <person name="Fujimura T."/>
            <person name="Ashihara H."/>
        </authorList>
    </citation>
    <scope>BIOPHYSICOCHEMICAL PROPERTIES</scope>
</reference>
<reference key="7">
    <citation type="journal article" date="2006" name="Mol. Genet. Genomics">
        <title>Substrate specificity of N-methyltransferase involved in purine alkaloids synthesis is dependent upon one amino acid residue of the enzyme.</title>
        <authorList>
            <person name="Yoneyama N."/>
            <person name="Morimoto H."/>
            <person name="Ye C.-X."/>
            <person name="Ashihara H."/>
            <person name="Mizuno K."/>
            <person name="Kato M."/>
        </authorList>
    </citation>
    <scope>FUNCTION</scope>
    <scope>CATALYTIC ACTIVITY</scope>
    <scope>PATHWAY</scope>
</reference>
<reference key="8">
    <citation type="journal article" date="2008" name="Phytochemistry">
        <title>Caffeine and related purine alkaloids: biosynthesis, catabolism, function and genetic engineering.</title>
        <authorList>
            <person name="Ashihara H."/>
            <person name="Sano H."/>
            <person name="Crozier A."/>
        </authorList>
    </citation>
    <scope>REVIEW ON CAFFEINE BIOSYNTHESIS</scope>
</reference>
<reference key="9">
    <citation type="journal article" date="2010" name="Z. Naturforsch. C Biosci.">
        <title>Expression for caffeine biosynthesis and related enzymes in Camellia sinensis.</title>
        <authorList>
            <person name="Kato M."/>
            <person name="Kitao N."/>
            <person name="Ishida M."/>
            <person name="Morimoto H."/>
            <person name="Irino F."/>
            <person name="Mizuno K."/>
        </authorList>
    </citation>
    <scope>TISSUE SPECIFICITY</scope>
    <scope>DEVELOPMENTAL STAGE</scope>
    <scope>INDUCTION BY DROUGHT</scope>
</reference>
<reference key="10">
    <citation type="journal article" date="2014" name="PLoS ONE">
        <title>Metabolic engineering of Saccharomyces cerevisiae for caffeine and theobromine production.</title>
        <authorList>
            <person name="Jin L."/>
            <person name="Bhuiya M.W."/>
            <person name="Li M."/>
            <person name="Liu X."/>
            <person name="Han J."/>
            <person name="Deng W."/>
            <person name="Wang M."/>
            <person name="Yu O."/>
            <person name="Zhang Z."/>
        </authorList>
    </citation>
    <scope>FUNCTION</scope>
    <scope>MUTAGENESIS OF ARG-225; PHE-271; ALA-272 AND VAL-317</scope>
    <scope>BIOTECHNOLOGY</scope>
</reference>
<reference key="11">
    <citation type="journal article" date="2016" name="Plant Physiol. Biochem.">
        <title>Natural allelic variations of TCS1 play a crucial role in caffeine biosynthesis of tea plant and its related species.</title>
        <authorList>
            <person name="Jin J.-Q."/>
            <person name="Yao M.-Z."/>
            <person name="Ma C.-L."/>
            <person name="Ma J.-Q."/>
            <person name="Chen L."/>
        </authorList>
    </citation>
    <scope>FUNCTION</scope>
    <scope>MUTAGENESIS OF SER-269</scope>
    <scope>CATALYTIC ACTIVITY</scope>
    <scope>GENE FAMILY</scope>
    <scope>NOMENCLATURE</scope>
</reference>
<reference key="12">
    <citation type="journal article" date="2016" name="Plant Physiol. Biochem.">
        <title>Association mapping of caffeine content with TCS1 in tea plant and its related species.</title>
        <authorList>
            <person name="Jin J.-Q."/>
            <person name="Yao M.-Z."/>
            <person name="Ma C.-L."/>
            <person name="Ma J.-Q."/>
            <person name="Chen L."/>
        </authorList>
    </citation>
    <scope>MUTAGENESIS OF HIS-153 AND PRO-332</scope>
</reference>
<reference key="13">
    <citation type="journal article" date="2018" name="J. Agric. Food Chem.">
        <title>Hongyacha, a naturally caffeine-free tea plant from Fujian, China.</title>
        <authorList>
            <person name="Jin J.Q."/>
            <person name="Chai Y.F."/>
            <person name="Liu Y.F."/>
            <person name="Zhang J."/>
            <person name="Yao M.Z."/>
            <person name="Chen L."/>
        </authorList>
    </citation>
    <scope>FUNCTION</scope>
    <scope>CATALYTIC ACTIVITY</scope>
</reference>
<proteinExistence type="evidence at protein level"/>
<protein>
    <recommendedName>
        <fullName evidence="16">3,7-dimethylxanthine N-methyltransferase TCS1</fullName>
        <shortName evidence="14 15">TCS1a</shortName>
        <ecNumber evidence="4 7 10 12">2.1.1.160</ecNumber>
    </recommendedName>
    <alternativeName>
        <fullName evidence="13">Caffeine synthase 1</fullName>
    </alternativeName>
</protein>
<accession>Q9FZN8</accession>
<accession>A5HF92</accession>
<accession>K9MNV5</accession>
<sequence length="369" mass="41272">MELATAGKVNEVLFMNRGEGESSYAQNSSFTQQVASMAQPALENAVETLFSRDFHLQALNAADLGCAAGPNTFAVISTIKRMMEKKCRELNCQTLELQVYLNDLFGNDFNTLFKGLSSEVIGNKCEEVPCYVMGVPGSFHGRLFPRNSLHLVHSSYSVHWLTQAPKGLTSREGLALNKGKIYISKTSPPVVREAYLSQFHEDFTMFLNARSQEVVPNGCMVLILRGRQCSDPSDMQSCFTWELLAMAIAELVSQGLIDEDKLDTFNIPSYFASLEEVKDIVERDGSFTIDHIEGFDLDSVEMQENDKWVRGEKFTKVVRAFTEPIISNQFGPEIMDKLYDKFTHIVVSDLEAKLPKTTSIILVLSKIDG</sequence>
<dbReference type="EC" id="2.1.1.160" evidence="4 7 10 12"/>
<dbReference type="EMBL" id="AB031280">
    <property type="protein sequence ID" value="BAB12278.1"/>
    <property type="molecule type" value="mRNA"/>
</dbReference>
<dbReference type="EMBL" id="EF526217">
    <property type="protein sequence ID" value="ABP98983.1"/>
    <property type="molecule type" value="Genomic_DNA"/>
</dbReference>
<dbReference type="EMBL" id="JX647690">
    <property type="protein sequence ID" value="AFV99128.1"/>
    <property type="molecule type" value="Genomic_DNA"/>
</dbReference>
<dbReference type="SMR" id="Q9FZN8"/>
<dbReference type="KEGG" id="ag:BAB12278"/>
<dbReference type="BRENDA" id="2.1.1.159">
    <property type="organism ID" value="1084"/>
</dbReference>
<dbReference type="BRENDA" id="2.1.1.160">
    <property type="organism ID" value="1084"/>
</dbReference>
<dbReference type="SABIO-RK" id="Q9FZN8"/>
<dbReference type="GO" id="GO:0102741">
    <property type="term" value="F:caffeine synthase activity"/>
    <property type="evidence" value="ECO:0007669"/>
    <property type="project" value="UniProtKB-EC"/>
</dbReference>
<dbReference type="GO" id="GO:0046872">
    <property type="term" value="F:metal ion binding"/>
    <property type="evidence" value="ECO:0007669"/>
    <property type="project" value="UniProtKB-KW"/>
</dbReference>
<dbReference type="GO" id="GO:0009820">
    <property type="term" value="P:alkaloid metabolic process"/>
    <property type="evidence" value="ECO:0007669"/>
    <property type="project" value="UniProtKB-KW"/>
</dbReference>
<dbReference type="GO" id="GO:0032259">
    <property type="term" value="P:methylation"/>
    <property type="evidence" value="ECO:0007669"/>
    <property type="project" value="UniProtKB-KW"/>
</dbReference>
<dbReference type="Gene3D" id="1.10.1200.270">
    <property type="entry name" value="Methyltransferase, alpha-helical capping domain"/>
    <property type="match status" value="1"/>
</dbReference>
<dbReference type="Gene3D" id="3.40.50.150">
    <property type="entry name" value="Vaccinia Virus protein VP39"/>
    <property type="match status" value="1"/>
</dbReference>
<dbReference type="InterPro" id="IPR005299">
    <property type="entry name" value="MeTrfase_7"/>
</dbReference>
<dbReference type="InterPro" id="IPR042086">
    <property type="entry name" value="MeTrfase_capping"/>
</dbReference>
<dbReference type="InterPro" id="IPR029063">
    <property type="entry name" value="SAM-dependent_MTases_sf"/>
</dbReference>
<dbReference type="PANTHER" id="PTHR31009">
    <property type="entry name" value="S-ADENOSYL-L-METHIONINE:CARBOXYL METHYLTRANSFERASE FAMILY PROTEIN"/>
    <property type="match status" value="1"/>
</dbReference>
<dbReference type="Pfam" id="PF03492">
    <property type="entry name" value="Methyltransf_7"/>
    <property type="match status" value="1"/>
</dbReference>
<dbReference type="SUPFAM" id="SSF53335">
    <property type="entry name" value="S-adenosyl-L-methionine-dependent methyltransferases"/>
    <property type="match status" value="1"/>
</dbReference>
<keyword id="KW-0017">Alkaloid metabolism</keyword>
<keyword id="KW-0903">Direct protein sequencing</keyword>
<keyword id="KW-0460">Magnesium</keyword>
<keyword id="KW-0479">Metal-binding</keyword>
<keyword id="KW-0489">Methyltransferase</keyword>
<keyword id="KW-0949">S-adenosyl-L-methionine</keyword>
<keyword id="KW-0808">Transferase</keyword>
<feature type="chain" id="PRO_0000408310" description="3,7-dimethylxanthine N-methyltransferase TCS1">
    <location>
        <begin position="1"/>
        <end position="369"/>
    </location>
</feature>
<feature type="binding site" evidence="1">
    <location>
        <position position="24"/>
    </location>
    <ligand>
        <name>S-adenosyl-L-homocysteine</name>
        <dbReference type="ChEBI" id="CHEBI:57856"/>
    </ligand>
</feature>
<feature type="binding site" evidence="1">
    <location>
        <position position="31"/>
    </location>
    <ligand>
        <name>caffeine</name>
        <dbReference type="ChEBI" id="CHEBI:27732"/>
    </ligand>
</feature>
<feature type="binding site" evidence="1">
    <location>
        <position position="66"/>
    </location>
    <ligand>
        <name>S-adenosyl-L-homocysteine</name>
        <dbReference type="ChEBI" id="CHEBI:57856"/>
    </ligand>
</feature>
<feature type="binding site" evidence="1">
    <location>
        <position position="71"/>
    </location>
    <ligand>
        <name>S-adenosyl-L-homocysteine</name>
        <dbReference type="ChEBI" id="CHEBI:57856"/>
    </ligand>
</feature>
<feature type="binding site" evidence="1">
    <location>
        <position position="103"/>
    </location>
    <ligand>
        <name>S-adenosyl-L-homocysteine</name>
        <dbReference type="ChEBI" id="CHEBI:57856"/>
    </ligand>
</feature>
<feature type="binding site" evidence="1">
    <location>
        <position position="104"/>
    </location>
    <ligand>
        <name>S-adenosyl-L-homocysteine</name>
        <dbReference type="ChEBI" id="CHEBI:57856"/>
    </ligand>
</feature>
<feature type="binding site" evidence="1">
    <location>
        <position position="138"/>
    </location>
    <ligand>
        <name>S-adenosyl-L-homocysteine</name>
        <dbReference type="ChEBI" id="CHEBI:57856"/>
    </ligand>
</feature>
<feature type="binding site" evidence="1">
    <location>
        <position position="139"/>
    </location>
    <ligand>
        <name>S-adenosyl-L-homocysteine</name>
        <dbReference type="ChEBI" id="CHEBI:57856"/>
    </ligand>
</feature>
<feature type="binding site" evidence="1">
    <location>
        <position position="156"/>
    </location>
    <ligand>
        <name>caffeine</name>
        <dbReference type="ChEBI" id="CHEBI:27732"/>
    </ligand>
</feature>
<feature type="binding site" evidence="1">
    <location>
        <position position="159"/>
    </location>
    <ligand>
        <name>caffeine</name>
        <dbReference type="ChEBI" id="CHEBI:27732"/>
    </ligand>
</feature>
<feature type="binding site" evidence="1">
    <location>
        <position position="160"/>
    </location>
    <ligand>
        <name>caffeine</name>
        <dbReference type="ChEBI" id="CHEBI:27732"/>
    </ligand>
</feature>
<feature type="binding site" evidence="2">
    <location>
        <position position="177"/>
    </location>
    <ligand>
        <name>Mg(2+)</name>
        <dbReference type="ChEBI" id="CHEBI:18420"/>
    </ligand>
</feature>
<feature type="binding site" evidence="1">
    <location>
        <position position="225"/>
    </location>
    <ligand>
        <name>caffeine</name>
        <dbReference type="ChEBI" id="CHEBI:27732"/>
    </ligand>
</feature>
<feature type="binding site" evidence="2">
    <location>
        <position position="263"/>
    </location>
    <ligand>
        <name>Mg(2+)</name>
        <dbReference type="ChEBI" id="CHEBI:18420"/>
    </ligand>
</feature>
<feature type="binding site" evidence="2">
    <location>
        <position position="265"/>
    </location>
    <ligand>
        <name>Mg(2+)</name>
        <dbReference type="ChEBI" id="CHEBI:18420"/>
    </ligand>
</feature>
<feature type="binding site" evidence="2">
    <location>
        <position position="266"/>
    </location>
    <ligand>
        <name>Mg(2+)</name>
        <dbReference type="ChEBI" id="CHEBI:18420"/>
    </ligand>
</feature>
<feature type="binding site" evidence="1">
    <location>
        <position position="321"/>
    </location>
    <ligand>
        <name>caffeine</name>
        <dbReference type="ChEBI" id="CHEBI:27732"/>
    </ligand>
</feature>
<feature type="site" description="Involved in substrate discrimination" evidence="11">
    <location>
        <position position="153"/>
    </location>
</feature>
<feature type="site" description="Involved in substrate discrimination" evidence="9">
    <location>
        <position position="225"/>
    </location>
</feature>
<feature type="site" description="Involved in substrate discrimination" evidence="10">
    <location>
        <position position="269"/>
    </location>
</feature>
<feature type="site" description="Involved in substrate discrimination" evidence="9">
    <location>
        <position position="317"/>
    </location>
</feature>
<feature type="site" description="Involved in substrate discrimination" evidence="11">
    <location>
        <position position="332"/>
    </location>
</feature>
<feature type="mutagenesis site" description="Increased theobromine synthase and caffeine synthase activities." evidence="11">
    <original>H</original>
    <variation>Y</variation>
    <location>
        <position position="153"/>
    </location>
</feature>
<feature type="mutagenesis site" description="Reduced theobromine accumulation." evidence="9">
    <original>R</original>
    <variation>H</variation>
    <location>
        <position position="225"/>
    </location>
</feature>
<feature type="mutagenesis site" description="Increased caffeine synthase activity, but reduced theobromine synthase activity." evidence="10">
    <original>S</original>
    <variation>C</variation>
    <location>
        <position position="269"/>
    </location>
</feature>
<feature type="mutagenesis site" description="Enhanced theobromine synthase and caffeine synthase activities." evidence="9">
    <original>F</original>
    <variation>W</variation>
    <location>
        <position position="271"/>
    </location>
</feature>
<feature type="mutagenesis site" description="Reduced theobromine accumulation." evidence="9">
    <original>A</original>
    <variation>P</variation>
    <location>
        <position position="272"/>
    </location>
</feature>
<feature type="mutagenesis site" description="Enhanced theobromine synthase and caffeine synthase activities." evidence="9">
    <original>V</original>
    <variation>M</variation>
    <location>
        <position position="317"/>
    </location>
</feature>
<feature type="mutagenesis site" description="Reduced theobromine synthase activity, but normal caffeine synthase activity." evidence="11">
    <original>P</original>
    <variation>H</variation>
    <location>
        <position position="332"/>
    </location>
</feature>
<feature type="sequence conflict" description="In Ref. 4; AA sequence." evidence="16" ref="4">
    <original>G</original>
    <variation>E</variation>
    <location>
        <position position="20"/>
    </location>
</feature>
<feature type="sequence conflict" description="In Ref. 4; AA sequence." evidence="16" ref="4">
    <original>S</original>
    <variation>Q</variation>
    <location>
        <position position="29"/>
    </location>
</feature>
<feature type="sequence conflict" description="In Ref. 4; AA sequence." evidence="16" ref="4">
    <original>Q</original>
    <variation>V</variation>
    <location>
        <position position="33"/>
    </location>
</feature>
<feature type="sequence conflict" description="In Ref. 2; ABP98983 and 3; AFV99128." evidence="16" ref="2 3">
    <original>P</original>
    <variation>S</variation>
    <location>
        <position position="129"/>
    </location>
</feature>
<feature type="sequence conflict" description="In Ref. 2; ABP98983 and 3; AFV99128." evidence="16" ref="2 3">
    <original>V</original>
    <variation>L</variation>
    <location>
        <position position="300"/>
    </location>
</feature>
<feature type="sequence conflict" description="In Ref. 2; ABP98983 and 3; AFV99128." evidence="16" ref="2 3">
    <original>P</original>
    <variation>H</variation>
    <location>
        <position position="332"/>
    </location>
</feature>
<name>TCS1_CAMSI</name>
<evidence type="ECO:0000250" key="1">
    <source>
        <dbReference type="UniProtKB" id="A0A6C0WW36"/>
    </source>
</evidence>
<evidence type="ECO:0000250" key="2">
    <source>
        <dbReference type="UniProtKB" id="Q9FLN8"/>
    </source>
</evidence>
<evidence type="ECO:0000269" key="3">
    <source>
    </source>
</evidence>
<evidence type="ECO:0000269" key="4">
    <source>
    </source>
</evidence>
<evidence type="ECO:0000269" key="5">
    <source>
    </source>
</evidence>
<evidence type="ECO:0000269" key="6">
    <source>
    </source>
</evidence>
<evidence type="ECO:0000269" key="7">
    <source>
    </source>
</evidence>
<evidence type="ECO:0000269" key="8">
    <source>
    </source>
</evidence>
<evidence type="ECO:0000269" key="9">
    <source>
    </source>
</evidence>
<evidence type="ECO:0000269" key="10">
    <source>
    </source>
</evidence>
<evidence type="ECO:0000269" key="11">
    <source>
    </source>
</evidence>
<evidence type="ECO:0000269" key="12">
    <source>
    </source>
</evidence>
<evidence type="ECO:0000303" key="13">
    <source>
    </source>
</evidence>
<evidence type="ECO:0000303" key="14">
    <source>
    </source>
</evidence>
<evidence type="ECO:0000303" key="15">
    <source>
    </source>
</evidence>
<evidence type="ECO:0000305" key="16"/>
<comment type="function">
    <text evidence="4 7 9 10 12">Involved in the biosynthesis of caffeine (PubMed:10984041, PubMed:16333668, PubMed:25133732, PubMed:26773541, PubMed:30303011). Catalyzes the conversion of 7-methylxanthine (7mX) to theobromine and of theobromine to caffeine (PubMed:10984041, PubMed:16333668, PubMed:25133732, PubMed:26773541, PubMed:30303011). Has 3-N- and 1-N-methylation activity (PubMed:10984041, PubMed:16333668).</text>
</comment>
<comment type="catalytic activity">
    <reaction evidence="4 7 10 12">
        <text>7-methylxanthine + S-adenosyl-L-methionine = theobromine + S-adenosyl-L-homocysteine + H(+)</text>
        <dbReference type="Rhea" id="RHEA:24604"/>
        <dbReference type="ChEBI" id="CHEBI:15378"/>
        <dbReference type="ChEBI" id="CHEBI:28946"/>
        <dbReference type="ChEBI" id="CHEBI:48991"/>
        <dbReference type="ChEBI" id="CHEBI:57856"/>
        <dbReference type="ChEBI" id="CHEBI:59789"/>
        <dbReference type="EC" id="2.1.1.160"/>
    </reaction>
    <physiologicalReaction direction="left-to-right" evidence="4 7 10">
        <dbReference type="Rhea" id="RHEA:24605"/>
    </physiologicalReaction>
</comment>
<comment type="catalytic activity">
    <reaction evidence="4 7 10 12">
        <text>theobromine + S-adenosyl-L-methionine = caffeine + S-adenosyl-L-homocysteine + H(+)</text>
        <dbReference type="Rhea" id="RHEA:20944"/>
        <dbReference type="ChEBI" id="CHEBI:15378"/>
        <dbReference type="ChEBI" id="CHEBI:27732"/>
        <dbReference type="ChEBI" id="CHEBI:28946"/>
        <dbReference type="ChEBI" id="CHEBI:57856"/>
        <dbReference type="ChEBI" id="CHEBI:59789"/>
        <dbReference type="EC" id="2.1.1.160"/>
    </reaction>
    <physiologicalReaction direction="left-to-right" evidence="4 7 10">
        <dbReference type="Rhea" id="RHEA:20945"/>
    </physiologicalReaction>
</comment>
<comment type="catalytic activity">
    <reaction evidence="4 7">
        <text>1,7-dimethylxanthine + S-adenosyl-L-methionine = caffeine + S-adenosyl-L-homocysteine + H(+)</text>
        <dbReference type="Rhea" id="RHEA:10280"/>
        <dbReference type="ChEBI" id="CHEBI:15378"/>
        <dbReference type="ChEBI" id="CHEBI:25858"/>
        <dbReference type="ChEBI" id="CHEBI:27732"/>
        <dbReference type="ChEBI" id="CHEBI:57856"/>
        <dbReference type="ChEBI" id="CHEBI:59789"/>
        <dbReference type="EC" id="2.1.1.160"/>
    </reaction>
    <physiologicalReaction direction="left-to-right" evidence="4 7">
        <dbReference type="Rhea" id="RHEA:10281"/>
    </physiologicalReaction>
</comment>
<comment type="cofactor">
    <cofactor evidence="2">
        <name>Mg(2+)</name>
        <dbReference type="ChEBI" id="CHEBI:18420"/>
    </cofactor>
    <text evidence="2">Binds 1 Mg(2+) ion per subunit.</text>
</comment>
<comment type="biophysicochemical properties">
    <kinetics>
        <KM evidence="3 5 6">24 uM for paraxanthine</KM>
        <KM evidence="3 5 6">186 uM for 7-methylxanthine</KM>
        <KM evidence="3 5 6">344 uM for theobromine</KM>
        <KM evidence="3 5 6">21 uM for S-adenosyl-L-methionine</KM>
    </kinetics>
    <phDependence>
        <text evidence="3 5 6">Optimum pH is 8.5.</text>
    </phDependence>
</comment>
<comment type="pathway">
    <text evidence="4">Alkaloid biosynthesis.</text>
</comment>
<comment type="tissue specificity">
    <text evidence="8">Expressed in young leaves and flowers.</text>
</comment>
<comment type="developmental stage">
    <text evidence="8">Expression declines during leaf development but remains constant throughout the flower development.</text>
</comment>
<comment type="induction">
    <text evidence="8">Down-regulated by drought.</text>
</comment>
<comment type="biotechnology">
    <text evidence="9">Saccharomyces cerevisiae (Yeast) expressing Coffea arabica (coffee) xanthosine methyltransferase (CaXMT1) and Camellia sinensis (tea) caffeine synthase (TCS1) accumulates caffeine.</text>
</comment>
<comment type="similarity">
    <text evidence="16">Belongs to the methyltransferase superfamily. Type-7 methyltransferase family.</text>
</comment>
<organism>
    <name type="scientific">Camellia sinensis</name>
    <name type="common">Tea plant</name>
    <name type="synonym">Thea sinensis</name>
    <dbReference type="NCBI Taxonomy" id="4442"/>
    <lineage>
        <taxon>Eukaryota</taxon>
        <taxon>Viridiplantae</taxon>
        <taxon>Streptophyta</taxon>
        <taxon>Embryophyta</taxon>
        <taxon>Tracheophyta</taxon>
        <taxon>Spermatophyta</taxon>
        <taxon>Magnoliopsida</taxon>
        <taxon>eudicotyledons</taxon>
        <taxon>Gunneridae</taxon>
        <taxon>Pentapetalae</taxon>
        <taxon>asterids</taxon>
        <taxon>Ericales</taxon>
        <taxon>Theaceae</taxon>
        <taxon>Camellia</taxon>
    </lineage>
</organism>
<gene>
    <name evidence="13" type="primary">TCS1</name>
    <name evidence="14 15" type="synonym">TCS1A</name>
</gene>